<organism>
    <name type="scientific">Schizosaccharomyces pombe (strain 972 / ATCC 24843)</name>
    <name type="common">Fission yeast</name>
    <dbReference type="NCBI Taxonomy" id="284812"/>
    <lineage>
        <taxon>Eukaryota</taxon>
        <taxon>Fungi</taxon>
        <taxon>Dikarya</taxon>
        <taxon>Ascomycota</taxon>
        <taxon>Taphrinomycotina</taxon>
        <taxon>Schizosaccharomycetes</taxon>
        <taxon>Schizosaccharomycetales</taxon>
        <taxon>Schizosaccharomycetaceae</taxon>
        <taxon>Schizosaccharomyces</taxon>
    </lineage>
</organism>
<sequence>MIFARRLVLEVTYVSKRASVLNLKSENDHFLSRPRISESLPTSGEVGIAKVPAKLASALPPYSVFAPVSLSFVRMNCG</sequence>
<gene>
    <name type="ORF">SPAC1834.13</name>
</gene>
<proteinExistence type="predicted"/>
<protein>
    <recommendedName>
        <fullName>Uncharacterized protein c1834.13</fullName>
    </recommendedName>
</protein>
<reference key="1">
    <citation type="journal article" date="2002" name="Nature">
        <title>The genome sequence of Schizosaccharomyces pombe.</title>
        <authorList>
            <person name="Wood V."/>
            <person name="Gwilliam R."/>
            <person name="Rajandream M.A."/>
            <person name="Lyne M.H."/>
            <person name="Lyne R."/>
            <person name="Stewart A."/>
            <person name="Sgouros J.G."/>
            <person name="Peat N."/>
            <person name="Hayles J."/>
            <person name="Baker S.G."/>
            <person name="Basham D."/>
            <person name="Bowman S."/>
            <person name="Brooks K."/>
            <person name="Brown D."/>
            <person name="Brown S."/>
            <person name="Chillingworth T."/>
            <person name="Churcher C.M."/>
            <person name="Collins M."/>
            <person name="Connor R."/>
            <person name="Cronin A."/>
            <person name="Davis P."/>
            <person name="Feltwell T."/>
            <person name="Fraser A."/>
            <person name="Gentles S."/>
            <person name="Goble A."/>
            <person name="Hamlin N."/>
            <person name="Harris D.E."/>
            <person name="Hidalgo J."/>
            <person name="Hodgson G."/>
            <person name="Holroyd S."/>
            <person name="Hornsby T."/>
            <person name="Howarth S."/>
            <person name="Huckle E.J."/>
            <person name="Hunt S."/>
            <person name="Jagels K."/>
            <person name="James K.D."/>
            <person name="Jones L."/>
            <person name="Jones M."/>
            <person name="Leather S."/>
            <person name="McDonald S."/>
            <person name="McLean J."/>
            <person name="Mooney P."/>
            <person name="Moule S."/>
            <person name="Mungall K.L."/>
            <person name="Murphy L.D."/>
            <person name="Niblett D."/>
            <person name="Odell C."/>
            <person name="Oliver K."/>
            <person name="O'Neil S."/>
            <person name="Pearson D."/>
            <person name="Quail M.A."/>
            <person name="Rabbinowitsch E."/>
            <person name="Rutherford K.M."/>
            <person name="Rutter S."/>
            <person name="Saunders D."/>
            <person name="Seeger K."/>
            <person name="Sharp S."/>
            <person name="Skelton J."/>
            <person name="Simmonds M.N."/>
            <person name="Squares R."/>
            <person name="Squares S."/>
            <person name="Stevens K."/>
            <person name="Taylor K."/>
            <person name="Taylor R.G."/>
            <person name="Tivey A."/>
            <person name="Walsh S.V."/>
            <person name="Warren T."/>
            <person name="Whitehead S."/>
            <person name="Woodward J.R."/>
            <person name="Volckaert G."/>
            <person name="Aert R."/>
            <person name="Robben J."/>
            <person name="Grymonprez B."/>
            <person name="Weltjens I."/>
            <person name="Vanstreels E."/>
            <person name="Rieger M."/>
            <person name="Schaefer M."/>
            <person name="Mueller-Auer S."/>
            <person name="Gabel C."/>
            <person name="Fuchs M."/>
            <person name="Duesterhoeft A."/>
            <person name="Fritzc C."/>
            <person name="Holzer E."/>
            <person name="Moestl D."/>
            <person name="Hilbert H."/>
            <person name="Borzym K."/>
            <person name="Langer I."/>
            <person name="Beck A."/>
            <person name="Lehrach H."/>
            <person name="Reinhardt R."/>
            <person name="Pohl T.M."/>
            <person name="Eger P."/>
            <person name="Zimmermann W."/>
            <person name="Wedler H."/>
            <person name="Wambutt R."/>
            <person name="Purnelle B."/>
            <person name="Goffeau A."/>
            <person name="Cadieu E."/>
            <person name="Dreano S."/>
            <person name="Gloux S."/>
            <person name="Lelaure V."/>
            <person name="Mottier S."/>
            <person name="Galibert F."/>
            <person name="Aves S.J."/>
            <person name="Xiang Z."/>
            <person name="Hunt C."/>
            <person name="Moore K."/>
            <person name="Hurst S.M."/>
            <person name="Lucas M."/>
            <person name="Rochet M."/>
            <person name="Gaillardin C."/>
            <person name="Tallada V.A."/>
            <person name="Garzon A."/>
            <person name="Thode G."/>
            <person name="Daga R.R."/>
            <person name="Cruzado L."/>
            <person name="Jimenez J."/>
            <person name="Sanchez M."/>
            <person name="del Rey F."/>
            <person name="Benito J."/>
            <person name="Dominguez A."/>
            <person name="Revuelta J.L."/>
            <person name="Moreno S."/>
            <person name="Armstrong J."/>
            <person name="Forsburg S.L."/>
            <person name="Cerutti L."/>
            <person name="Lowe T."/>
            <person name="McCombie W.R."/>
            <person name="Paulsen I."/>
            <person name="Potashkin J."/>
            <person name="Shpakovski G.V."/>
            <person name="Ussery D."/>
            <person name="Barrell B.G."/>
            <person name="Nurse P."/>
        </authorList>
    </citation>
    <scope>NUCLEOTIDE SEQUENCE [LARGE SCALE GENOMIC DNA]</scope>
    <source>
        <strain>972 / ATCC 24843</strain>
    </source>
</reference>
<reference key="2">
    <citation type="journal article" date="2011" name="Science">
        <title>Comparative functional genomics of the fission yeasts.</title>
        <authorList>
            <person name="Rhind N."/>
            <person name="Chen Z."/>
            <person name="Yassour M."/>
            <person name="Thompson D.A."/>
            <person name="Haas B.J."/>
            <person name="Habib N."/>
            <person name="Wapinski I."/>
            <person name="Roy S."/>
            <person name="Lin M.F."/>
            <person name="Heiman D.I."/>
            <person name="Young S.K."/>
            <person name="Furuya K."/>
            <person name="Guo Y."/>
            <person name="Pidoux A."/>
            <person name="Chen H.M."/>
            <person name="Robbertse B."/>
            <person name="Goldberg J.M."/>
            <person name="Aoki K."/>
            <person name="Bayne E.H."/>
            <person name="Berlin A.M."/>
            <person name="Desjardins C.A."/>
            <person name="Dobbs E."/>
            <person name="Dukaj L."/>
            <person name="Fan L."/>
            <person name="FitzGerald M.G."/>
            <person name="French C."/>
            <person name="Gujja S."/>
            <person name="Hansen K."/>
            <person name="Keifenheim D."/>
            <person name="Levin J.Z."/>
            <person name="Mosher R.A."/>
            <person name="Mueller C.A."/>
            <person name="Pfiffner J."/>
            <person name="Priest M."/>
            <person name="Russ C."/>
            <person name="Smialowska A."/>
            <person name="Swoboda P."/>
            <person name="Sykes S.M."/>
            <person name="Vaughn M."/>
            <person name="Vengrova S."/>
            <person name="Yoder R."/>
            <person name="Zeng Q."/>
            <person name="Allshire R."/>
            <person name="Baulcombe D."/>
            <person name="Birren B.W."/>
            <person name="Brown W."/>
            <person name="Ekwall K."/>
            <person name="Kellis M."/>
            <person name="Leatherwood J."/>
            <person name="Levin H."/>
            <person name="Margalit H."/>
            <person name="Martienssen R."/>
            <person name="Nieduszynski C.A."/>
            <person name="Spatafora J.W."/>
            <person name="Friedman N."/>
            <person name="Dalgaard J.Z."/>
            <person name="Baumann P."/>
            <person name="Niki H."/>
            <person name="Regev A."/>
            <person name="Nusbaum C."/>
        </authorList>
    </citation>
    <scope>IDENTIFICATION</scope>
</reference>
<name>YFVD_SCHPO</name>
<keyword id="KW-1185">Reference proteome</keyword>
<feature type="chain" id="PRO_0000416631" description="Uncharacterized protein c1834.13">
    <location>
        <begin position="1"/>
        <end position="78"/>
    </location>
</feature>
<dbReference type="EMBL" id="CU329670">
    <property type="protein sequence ID" value="CCD31340.1"/>
    <property type="molecule type" value="Genomic_DNA"/>
</dbReference>
<dbReference type="RefSeq" id="XP_004001795.1">
    <property type="nucleotide sequence ID" value="XM_004001746.1"/>
</dbReference>
<dbReference type="PaxDb" id="4896-SPAC1834.13.1"/>
<dbReference type="EnsemblFungi" id="SPAC1834.13.1">
    <property type="protein sequence ID" value="SPAC1834.13.1:pep"/>
    <property type="gene ID" value="SPAC1834.13"/>
</dbReference>
<dbReference type="PomBase" id="SPAC1834.13"/>
<dbReference type="VEuPathDB" id="FungiDB:SPAC1834.13"/>
<dbReference type="HOGENOM" id="CLU_2623392_0_0_1"/>
<dbReference type="InParanoid" id="G2TRJ7"/>
<dbReference type="PRO" id="PR:G2TRJ7"/>
<dbReference type="Proteomes" id="UP000002485">
    <property type="component" value="Chromosome I"/>
</dbReference>
<accession>G2TRJ7</accession>